<comment type="function">
    <text evidence="1">Component of the outer cell wall layer. Required for stability of the cell wall and for optimal growth. Required for resistance against several antifungal and cell wall-perturbing agents and for tolerance to heat shock (By similarity).</text>
</comment>
<comment type="subcellular location">
    <subcellularLocation>
        <location evidence="1">Secreted</location>
        <location evidence="1">Cell wall</location>
    </subcellularLocation>
    <text evidence="1">Covalently attached to the cell wall.</text>
</comment>
<comment type="domain">
    <text evidence="1">The PIR1/2/3 repeats are required for the covalent linkage to the cell wall (By similarity). Their number varies among different strains of S.cerevisiae.</text>
</comment>
<comment type="PTM">
    <text evidence="1">Covalently linked to beta-1,3-glucan of the inner cell wall layer via an alkali-sensitive ester linkage between the gamma-carboxyl group of glutamic acids, arising from specific glutamines within the PIR1/2/3 repeats, and hydroxyl groups of glucoses of beta-1,3-glucan chains.</text>
</comment>
<comment type="PTM">
    <text evidence="1">The propeptide is cleaved off in the late Golgi. While both peptides are secreted, only a fraction of the mature glycoprotein is incorporated into the cell wall (By similarity).</text>
</comment>
<comment type="PTM">
    <text evidence="1">O-glycosylated. Extensively O-mannosylated (By similarity).</text>
</comment>
<comment type="similarity">
    <text evidence="2">Belongs to the PIR protein family.</text>
</comment>
<organism>
    <name type="scientific">Saccharomyces cerevisiae (strain AWRI1631)</name>
    <name type="common">Baker's yeast</name>
    <dbReference type="NCBI Taxonomy" id="545124"/>
    <lineage>
        <taxon>Eukaryota</taxon>
        <taxon>Fungi</taxon>
        <taxon>Dikarya</taxon>
        <taxon>Ascomycota</taxon>
        <taxon>Saccharomycotina</taxon>
        <taxon>Saccharomycetes</taxon>
        <taxon>Saccharomycetales</taxon>
        <taxon>Saccharomycetaceae</taxon>
        <taxon>Saccharomyces</taxon>
    </lineage>
</organism>
<keyword id="KW-0134">Cell wall</keyword>
<keyword id="KW-0961">Cell wall biogenesis/degradation</keyword>
<keyword id="KW-0165">Cleavage on pair of basic residues</keyword>
<keyword id="KW-0325">Glycoprotein</keyword>
<keyword id="KW-0677">Repeat</keyword>
<keyword id="KW-0964">Secreted</keyword>
<keyword id="KW-0732">Signal</keyword>
<keyword id="KW-0346">Stress response</keyword>
<name>HS150_YEAS6</name>
<accession>B5VL26</accession>
<protein>
    <recommendedName>
        <fullName>Cell wall mannoprotein HSP150</fullName>
    </recommendedName>
    <alternativeName>
        <fullName>150 kDa heat shock glycoprotein</fullName>
    </alternativeName>
    <alternativeName>
        <fullName>Covalently-linked cell wall protein 7</fullName>
    </alternativeName>
    <alternativeName>
        <fullName>Protein with internal repeats 2</fullName>
    </alternativeName>
</protein>
<dbReference type="EMBL" id="ABSV01001267">
    <property type="protein sequence ID" value="EDZ71368.1"/>
    <property type="molecule type" value="Genomic_DNA"/>
</dbReference>
<dbReference type="OrthoDB" id="40414at4893"/>
<dbReference type="Proteomes" id="UP000008988">
    <property type="component" value="Unassembled WGS sequence"/>
</dbReference>
<dbReference type="GO" id="GO:0005576">
    <property type="term" value="C:extracellular region"/>
    <property type="evidence" value="ECO:0007669"/>
    <property type="project" value="UniProtKB-KW"/>
</dbReference>
<dbReference type="GO" id="GO:0009277">
    <property type="term" value="C:fungal-type cell wall"/>
    <property type="evidence" value="ECO:0007669"/>
    <property type="project" value="UniProtKB-ARBA"/>
</dbReference>
<dbReference type="GO" id="GO:0005199">
    <property type="term" value="F:structural constituent of cell wall"/>
    <property type="evidence" value="ECO:0007669"/>
    <property type="project" value="InterPro"/>
</dbReference>
<dbReference type="GO" id="GO:0031505">
    <property type="term" value="P:fungal-type cell wall organization"/>
    <property type="evidence" value="ECO:0007669"/>
    <property type="project" value="TreeGrafter"/>
</dbReference>
<dbReference type="InterPro" id="IPR054508">
    <property type="entry name" value="PIR1-like_C"/>
</dbReference>
<dbReference type="InterPro" id="IPR051153">
    <property type="entry name" value="Yeast_CWMannoprotein_PIR"/>
</dbReference>
<dbReference type="InterPro" id="IPR000420">
    <property type="entry name" value="Yeast_PIR_rpt"/>
</dbReference>
<dbReference type="PANTHER" id="PTHR47254">
    <property type="entry name" value="CELL WALL MANNOPROTEIN CIS3-RELATED"/>
    <property type="match status" value="1"/>
</dbReference>
<dbReference type="PANTHER" id="PTHR47254:SF1">
    <property type="entry name" value="CELL WALL MANNOPROTEIN CIS3-RELATED"/>
    <property type="match status" value="1"/>
</dbReference>
<dbReference type="Pfam" id="PF00399">
    <property type="entry name" value="PIR"/>
    <property type="match status" value="4"/>
</dbReference>
<dbReference type="Pfam" id="PF22799">
    <property type="entry name" value="PIR1-like_C"/>
    <property type="match status" value="1"/>
</dbReference>
<dbReference type="PROSITE" id="PS00929">
    <property type="entry name" value="PIR_REPEAT_1"/>
    <property type="match status" value="5"/>
</dbReference>
<dbReference type="PROSITE" id="PS50256">
    <property type="entry name" value="PIR_REPEAT_2"/>
    <property type="match status" value="5"/>
</dbReference>
<sequence>MQYKKTLVASALAATTLAAYAPSEPWSTLTPTATYSGGVTDYASTFGIAVQPISTTSSASSAATTASSKAKRAASQIGDGQVQAATTTASVSTKSSAAAVSQIGDGQIQATTKTTAAASLKLVMVKIQATTKTTAAAVSQIGDGQVQATTKTTAAAVSQITDGQVQATTKTTQAASQVSDGQVQATSATSASAAATSTDPVDAVSCKTSGTLEMNLKGGILTDGKGRIGSIVANRQFQFDGPPPQAGAIYAAGWSITPDGNLAIGDNDVFYQCLSGTFYNLYDEHIGSQCTPVHLEAIDLIDC</sequence>
<feature type="signal peptide" evidence="1">
    <location>
        <begin position="1"/>
        <end position="18"/>
    </location>
</feature>
<feature type="propeptide" id="PRO_0000377616" evidence="1">
    <location>
        <begin position="19"/>
        <end position="72"/>
    </location>
</feature>
<feature type="chain" id="PRO_0000377617" description="Cell wall mannoprotein HSP150">
    <location>
        <begin position="73"/>
        <end position="303"/>
    </location>
</feature>
<feature type="repeat" description="PIR1/2/3 1">
    <location>
        <begin position="71"/>
        <end position="89"/>
    </location>
</feature>
<feature type="repeat" description="PIR1/2/3 2">
    <location>
        <begin position="97"/>
        <end position="113"/>
    </location>
</feature>
<feature type="repeat" description="PIR1/2/3 3; degenerate">
    <location>
        <begin position="114"/>
        <end position="134"/>
    </location>
</feature>
<feature type="repeat" description="PIR1/2/3 4">
    <location>
        <begin position="135"/>
        <end position="153"/>
    </location>
</feature>
<feature type="repeat" description="PIR1/2/3 5">
    <location>
        <begin position="154"/>
        <end position="171"/>
    </location>
</feature>
<feature type="repeat" description="PIR1/2/3 6">
    <location>
        <begin position="172"/>
        <end position="190"/>
    </location>
</feature>
<feature type="site" description="Cleavage; by KEX2" evidence="1">
    <location>
        <begin position="72"/>
        <end position="73"/>
    </location>
</feature>
<feature type="site" description="Covalent attachment to cell wall glycan" evidence="1">
    <location>
        <position position="81"/>
    </location>
</feature>
<feature type="site" description="Covalent attachment to cell wall glycan" evidence="1">
    <location>
        <position position="107"/>
    </location>
</feature>
<feature type="site" description="Covalent attachment to cell wall glycan" evidence="1">
    <location>
        <position position="145"/>
    </location>
</feature>
<feature type="site" description="Covalent attachment to cell wall glycan" evidence="1">
    <location>
        <position position="164"/>
    </location>
</feature>
<feature type="site" description="Covalent attachment to cell wall glycan" evidence="1">
    <location>
        <position position="182"/>
    </location>
</feature>
<reference key="1">
    <citation type="journal article" date="2008" name="FEMS Yeast Res.">
        <title>Comparative genome analysis of a Saccharomyces cerevisiae wine strain.</title>
        <authorList>
            <person name="Borneman A.R."/>
            <person name="Forgan A.H."/>
            <person name="Pretorius I.S."/>
            <person name="Chambers P.J."/>
        </authorList>
    </citation>
    <scope>NUCLEOTIDE SEQUENCE [LARGE SCALE GENOMIC DNA]</scope>
    <source>
        <strain>AWRI1631</strain>
    </source>
</reference>
<evidence type="ECO:0000250" key="1"/>
<evidence type="ECO:0000305" key="2"/>
<gene>
    <name type="primary">HSP150</name>
    <name type="ORF">AWRI1631_100500</name>
</gene>
<proteinExistence type="inferred from homology"/>